<comment type="function">
    <text evidence="1">Component of the dark-operative protochlorophyllide reductase (DPOR) that uses Mg-ATP and reduced ferredoxin to reduce ring D of protochlorophyllide (Pchlide) to form chlorophyllide a (Chlide). This reaction is light-independent. The L component serves as a unique electron donor to the NB-component of the complex, and binds Mg-ATP.</text>
</comment>
<comment type="catalytic activity">
    <reaction evidence="1">
        <text>chlorophyllide a + oxidized 2[4Fe-4S]-[ferredoxin] + 2 ADP + 2 phosphate = protochlorophyllide a + reduced 2[4Fe-4S]-[ferredoxin] + 2 ATP + 2 H2O</text>
        <dbReference type="Rhea" id="RHEA:28202"/>
        <dbReference type="Rhea" id="RHEA-COMP:10002"/>
        <dbReference type="Rhea" id="RHEA-COMP:10004"/>
        <dbReference type="ChEBI" id="CHEBI:15377"/>
        <dbReference type="ChEBI" id="CHEBI:30616"/>
        <dbReference type="ChEBI" id="CHEBI:33722"/>
        <dbReference type="ChEBI" id="CHEBI:33723"/>
        <dbReference type="ChEBI" id="CHEBI:43474"/>
        <dbReference type="ChEBI" id="CHEBI:83348"/>
        <dbReference type="ChEBI" id="CHEBI:83350"/>
        <dbReference type="ChEBI" id="CHEBI:456216"/>
        <dbReference type="EC" id="1.3.7.7"/>
    </reaction>
</comment>
<comment type="cofactor">
    <cofactor evidence="1">
        <name>[4Fe-4S] cluster</name>
        <dbReference type="ChEBI" id="CHEBI:49883"/>
    </cofactor>
    <text evidence="1">Binds 1 [4Fe-4S] cluster per dimer.</text>
</comment>
<comment type="pathway">
    <text evidence="1">Porphyrin-containing compound metabolism; chlorophyll biosynthesis (light-independent).</text>
</comment>
<comment type="subunit">
    <text evidence="1">Homodimer. Protochlorophyllide reductase is composed of three subunits; ChlL, ChlN and ChlB.</text>
</comment>
<comment type="similarity">
    <text evidence="1">Belongs to the NifH/BchL/ChlL family.</text>
</comment>
<organism>
    <name type="scientific">Leptolyngbya boryana</name>
    <name type="common">Plectonema boryanum</name>
    <dbReference type="NCBI Taxonomy" id="1184"/>
    <lineage>
        <taxon>Bacteria</taxon>
        <taxon>Bacillati</taxon>
        <taxon>Cyanobacteriota</taxon>
        <taxon>Cyanophyceae</taxon>
        <taxon>Leptolyngbyales</taxon>
        <taxon>Leptolyngbyaceae</taxon>
        <taxon>Leptolyngbya group</taxon>
        <taxon>Leptolyngbya</taxon>
    </lineage>
</organism>
<keyword id="KW-0004">4Fe-4S</keyword>
<keyword id="KW-0067">ATP-binding</keyword>
<keyword id="KW-0149">Chlorophyll biosynthesis</keyword>
<keyword id="KW-0408">Iron</keyword>
<keyword id="KW-0411">Iron-sulfur</keyword>
<keyword id="KW-0460">Magnesium</keyword>
<keyword id="KW-0479">Metal-binding</keyword>
<keyword id="KW-0547">Nucleotide-binding</keyword>
<keyword id="KW-0560">Oxidoreductase</keyword>
<keyword id="KW-0602">Photosynthesis</keyword>
<protein>
    <recommendedName>
        <fullName evidence="1">Light-independent protochlorophyllide reductase iron-sulfur ATP-binding protein</fullName>
        <shortName evidence="1">DPOR subunit L</shortName>
        <shortName evidence="1">LI-POR subunit L</shortName>
        <ecNumber evidence="1">1.3.7.7</ecNumber>
    </recommendedName>
</protein>
<dbReference type="EC" id="1.3.7.7" evidence="1"/>
<dbReference type="EMBL" id="D00665">
    <property type="protein sequence ID" value="BAA00565.1"/>
    <property type="molecule type" value="Genomic_DNA"/>
</dbReference>
<dbReference type="PIR" id="JQ2154">
    <property type="entry name" value="JQ2154"/>
</dbReference>
<dbReference type="SMR" id="Q00237"/>
<dbReference type="BioCyc" id="MetaCyc:MONOMER-19731"/>
<dbReference type="UniPathway" id="UPA00670"/>
<dbReference type="GO" id="GO:0051539">
    <property type="term" value="F:4 iron, 4 sulfur cluster binding"/>
    <property type="evidence" value="ECO:0007669"/>
    <property type="project" value="UniProtKB-UniRule"/>
</dbReference>
<dbReference type="GO" id="GO:0005524">
    <property type="term" value="F:ATP binding"/>
    <property type="evidence" value="ECO:0007669"/>
    <property type="project" value="UniProtKB-UniRule"/>
</dbReference>
<dbReference type="GO" id="GO:0046872">
    <property type="term" value="F:metal ion binding"/>
    <property type="evidence" value="ECO:0007669"/>
    <property type="project" value="UniProtKB-KW"/>
</dbReference>
<dbReference type="GO" id="GO:0016730">
    <property type="term" value="F:oxidoreductase activity, acting on iron-sulfur proteins as donors"/>
    <property type="evidence" value="ECO:0007669"/>
    <property type="project" value="InterPro"/>
</dbReference>
<dbReference type="GO" id="GO:0016636">
    <property type="term" value="F:oxidoreductase activity, acting on the CH-CH group of donors, iron-sulfur protein as acceptor"/>
    <property type="evidence" value="ECO:0007669"/>
    <property type="project" value="UniProtKB-UniRule"/>
</dbReference>
<dbReference type="GO" id="GO:0036068">
    <property type="term" value="P:light-independent chlorophyll biosynthetic process"/>
    <property type="evidence" value="ECO:0007669"/>
    <property type="project" value="UniProtKB-UniRule"/>
</dbReference>
<dbReference type="GO" id="GO:0019685">
    <property type="term" value="P:photosynthesis, dark reaction"/>
    <property type="evidence" value="ECO:0007669"/>
    <property type="project" value="InterPro"/>
</dbReference>
<dbReference type="CDD" id="cd02032">
    <property type="entry name" value="Bchl-like"/>
    <property type="match status" value="1"/>
</dbReference>
<dbReference type="Gene3D" id="3.40.50.300">
    <property type="entry name" value="P-loop containing nucleotide triphosphate hydrolases"/>
    <property type="match status" value="1"/>
</dbReference>
<dbReference type="HAMAP" id="MF_00355">
    <property type="entry name" value="ChlL_BchL"/>
    <property type="match status" value="1"/>
</dbReference>
<dbReference type="InterPro" id="IPR030655">
    <property type="entry name" value="NifH/chlL_CS"/>
</dbReference>
<dbReference type="InterPro" id="IPR000392">
    <property type="entry name" value="NifH/frxC"/>
</dbReference>
<dbReference type="InterPro" id="IPR027417">
    <property type="entry name" value="P-loop_NTPase"/>
</dbReference>
<dbReference type="InterPro" id="IPR005971">
    <property type="entry name" value="Protochlorophyllide_ATP-bd"/>
</dbReference>
<dbReference type="NCBIfam" id="TIGR01281">
    <property type="entry name" value="DPOR_bchL"/>
    <property type="match status" value="1"/>
</dbReference>
<dbReference type="PANTHER" id="PTHR42864">
    <property type="entry name" value="LIGHT-INDEPENDENT PROTOCHLOROPHYLLIDE REDUCTASE IRON-SULFUR ATP-BINDING PROTEIN"/>
    <property type="match status" value="1"/>
</dbReference>
<dbReference type="PANTHER" id="PTHR42864:SF2">
    <property type="entry name" value="LIGHT-INDEPENDENT PROTOCHLOROPHYLLIDE REDUCTASE IRON-SULFUR ATP-BINDING PROTEIN"/>
    <property type="match status" value="1"/>
</dbReference>
<dbReference type="Pfam" id="PF00142">
    <property type="entry name" value="Fer4_NifH"/>
    <property type="match status" value="1"/>
</dbReference>
<dbReference type="PIRSF" id="PIRSF000363">
    <property type="entry name" value="Nitrogenase_iron"/>
    <property type="match status" value="1"/>
</dbReference>
<dbReference type="PRINTS" id="PR00091">
    <property type="entry name" value="NITROGNASEII"/>
</dbReference>
<dbReference type="SUPFAM" id="SSF52540">
    <property type="entry name" value="P-loop containing nucleoside triphosphate hydrolases"/>
    <property type="match status" value="1"/>
</dbReference>
<dbReference type="PROSITE" id="PS00746">
    <property type="entry name" value="NIFH_FRXC_1"/>
    <property type="match status" value="1"/>
</dbReference>
<dbReference type="PROSITE" id="PS00692">
    <property type="entry name" value="NIFH_FRXC_2"/>
    <property type="match status" value="1"/>
</dbReference>
<dbReference type="PROSITE" id="PS51026">
    <property type="entry name" value="NIFH_FRXC_3"/>
    <property type="match status" value="1"/>
</dbReference>
<name>CHLL_LEPBY</name>
<proteinExistence type="inferred from homology"/>
<evidence type="ECO:0000255" key="1">
    <source>
        <dbReference type="HAMAP-Rule" id="MF_00355"/>
    </source>
</evidence>
<gene>
    <name evidence="1" type="primary">chlL</name>
    <name type="synonym">frxC</name>
</gene>
<reference key="1">
    <citation type="journal article" date="1991" name="Plant Cell Physiol.">
        <title>Cloning, nucleotide sequences and differential expression of the nifH and nifH-like (frxC) genes from the filamentous nitrogen-fixing cyanobacterium Plectonema boryanum.</title>
        <authorList>
            <person name="Fujita Y."/>
            <person name="Takahashi Y."/>
            <person name="Shonai F."/>
            <person name="Ogura Y."/>
            <person name="Matsubara H."/>
        </authorList>
    </citation>
    <scope>NUCLEOTIDE SEQUENCE [GENOMIC DNA]</scope>
    <source>
        <strain>ATCC 27894 / CCAP 1463/1 / IAM M-101 / PCC 6306 / UTEX 581</strain>
    </source>
</reference>
<accession>Q00237</accession>
<sequence length="286" mass="31220">MKLAVYGKGGIGKSTTSCNISVALAKRGKKVLQIGCDPKHDSTFTLTGFLIPTIIDTLQEKDYHYEDVWAEDVIYKGYGGVDCVEAGGPPAGAGCGGYVVGETVKLLKELNAFDEYDVILFDVLGDVVCGGFAAPLNYADYCMIVTDNGFDALFAANRIAASVREKARTHPLRLAGLIGNRTAKRDLIEKYVDAVPMPILEVLPLIEDIRVSRVKGKTLFEMAESDPSLNYVCDYYLNIADQILANPEGVVPKDAADRDLFSLLSDFYLNPQQPKTAEEELDLMMV</sequence>
<feature type="chain" id="PRO_0000139570" description="Light-independent protochlorophyllide reductase iron-sulfur ATP-binding protein">
    <location>
        <begin position="1"/>
        <end position="286"/>
    </location>
</feature>
<feature type="binding site" evidence="1">
    <location>
        <begin position="10"/>
        <end position="15"/>
    </location>
    <ligand>
        <name>ATP</name>
        <dbReference type="ChEBI" id="CHEBI:30616"/>
    </ligand>
</feature>
<feature type="binding site" evidence="1">
    <location>
        <position position="14"/>
    </location>
    <ligand>
        <name>Mg(2+)</name>
        <dbReference type="ChEBI" id="CHEBI:18420"/>
    </ligand>
</feature>
<feature type="binding site" evidence="1">
    <location>
        <position position="39"/>
    </location>
    <ligand>
        <name>ATP</name>
        <dbReference type="ChEBI" id="CHEBI:30616"/>
    </ligand>
</feature>
<feature type="binding site" evidence="1">
    <location>
        <position position="95"/>
    </location>
    <ligand>
        <name>[4Fe-4S] cluster</name>
        <dbReference type="ChEBI" id="CHEBI:49883"/>
        <note>ligand shared between dimeric partners</note>
    </ligand>
</feature>
<feature type="binding site" evidence="1">
    <location>
        <position position="129"/>
    </location>
    <ligand>
        <name>[4Fe-4S] cluster</name>
        <dbReference type="ChEBI" id="CHEBI:49883"/>
        <note>ligand shared between dimeric partners</note>
    </ligand>
</feature>
<feature type="binding site" evidence="1">
    <location>
        <begin position="180"/>
        <end position="181"/>
    </location>
    <ligand>
        <name>ATP</name>
        <dbReference type="ChEBI" id="CHEBI:30616"/>
    </ligand>
</feature>